<protein>
    <recommendedName>
        <fullName>Major vault protein</fullName>
        <shortName>MVP</shortName>
    </recommendedName>
</protein>
<reference key="1">
    <citation type="submission" date="2002-09" db="EMBL/GenBank/DDBJ databases">
        <title>Identification of a major vault protein in channel catfish (Ictalurus punctatus).</title>
        <authorList>
            <person name="Rice C.D."/>
            <person name="Xiang Y."/>
        </authorList>
    </citation>
    <scope>NUCLEOTIDE SEQUENCE [MRNA]</scope>
    <source>
        <tissue>Leukocyte</tissue>
    </source>
</reference>
<organism>
    <name type="scientific">Ictalurus punctatus</name>
    <name type="common">Channel catfish</name>
    <name type="synonym">Silurus punctatus</name>
    <dbReference type="NCBI Taxonomy" id="7998"/>
    <lineage>
        <taxon>Eukaryota</taxon>
        <taxon>Metazoa</taxon>
        <taxon>Chordata</taxon>
        <taxon>Craniata</taxon>
        <taxon>Vertebrata</taxon>
        <taxon>Euteleostomi</taxon>
        <taxon>Actinopterygii</taxon>
        <taxon>Neopterygii</taxon>
        <taxon>Teleostei</taxon>
        <taxon>Ostariophysi</taxon>
        <taxon>Siluriformes</taxon>
        <taxon>Ictaluridae</taxon>
        <taxon>Ictalurus</taxon>
    </lineage>
</organism>
<evidence type="ECO:0000250" key="1"/>
<evidence type="ECO:0000250" key="2">
    <source>
        <dbReference type="UniProtKB" id="Q14764"/>
    </source>
</evidence>
<evidence type="ECO:0000255" key="3">
    <source>
        <dbReference type="PROSITE-ProRule" id="PRU00116"/>
    </source>
</evidence>
<evidence type="ECO:0000256" key="4">
    <source>
        <dbReference type="SAM" id="MobiDB-lite"/>
    </source>
</evidence>
<keyword id="KW-0963">Cytoplasm</keyword>
<keyword id="KW-0539">Nucleus</keyword>
<keyword id="KW-0677">Repeat</keyword>
<keyword id="KW-0687">Ribonucleoprotein</keyword>
<name>MVP_ICTPU</name>
<accession>Q9DGM7</accession>
<sequence>MSKRPAGSHMEHNDLTDASIIRIPPHHYIHVLDQNTNIARVEVGPLTYIRQDNERVLFSPTRMTMVPPRHYCVILNPVARDDEGHVQFDTAGQAKLRHADLEIRLTQDPFPLYPGEEIQKEVTPLQIVYPDTALRLQALLDFEEESGEKRVAGDEWLFEGPGTYIPRKEVAVLEIIKATVIREHQAIRLRARKEGVDRSGTRRVTGEEWQVSKVGAYLPGAHEEVIDIVNAFILTDKRALHVRALRPFRDAGGRDRRTGEEWLVTVADREAHIPSVAEEVVGVVDVTTLNSREYCVILDPVGPDGKPQLGQKRVVKGERSFFLRPGEHLENGIQDVYVLSEEEGLVLRAVEAFNDTEAQEEDEEEEEEEEQAKKTSVQRRPGDRWMLRGPIEYVPPVTVEVMLRRQAIPLDENEGIYVRDIKTGKVRAVIGHTYMLTHDEELWEKELPPNVEKLLSTVRDPLADRSEHNQNAVAEPRDKTMVVSYRVPHNAAVQVYDYREKKARVVFGPDLVMLGPDEQFTVLSLSGEKPKRANVIKAICLLLGPDFCTDIITIETADHARLQLQLAYNWHFEVKNHSDPAQAAALFSVPDFVGDACKAIASRIRGAVASVQFDDFHKNSIRIICSAVFGFDEKLAVRSSLRFNQNGLVISSVDIQSVEPVDQRTRDALQKSVQLAIEITTNSQEATARHEAERLEQEARGKLERQKITDQAEAERARKELLELEALSAAVESTGAAKAEAQSRAEAARIQGEAAVQEAKLKVEALRIEAEAEMVRLAKAREQELLYKKELDHLEVEKQQKLVTIESQRFKQLVEAIGSETLTAMARAGPELQVKMLQALGLKSTLITDGSSPINLFTTANGLLGAMKAPE</sequence>
<comment type="function">
    <text evidence="1">Required for normal vault structure. Vaults are multi-subunit structures that may act as scaffolds for proteins involved in signal transduction. Vaults may also play a role in nucleo-cytoplasmic transport (By similarity).</text>
</comment>
<comment type="subunit">
    <text evidence="1">The vault ribonucleoprotein particle is a huge (400 A x 670 A) cage structure of 12.9 MDa. It consists of a dimer of half-vaults, with each half-vault comprising 39 identical major vault protein (MVP) chains, PARP4 and one or more vault RNAs (vRNAs) (By similarity).</text>
</comment>
<comment type="subcellular location">
    <subcellularLocation>
        <location evidence="2">Cytoplasm</location>
    </subcellularLocation>
    <subcellularLocation>
        <location evidence="2">Nucleus</location>
    </subcellularLocation>
</comment>
<proteinExistence type="evidence at transcript level"/>
<gene>
    <name type="primary">mvp</name>
</gene>
<dbReference type="EMBL" id="AF255664">
    <property type="protein sequence ID" value="AAG00866.2"/>
    <property type="molecule type" value="mRNA"/>
</dbReference>
<dbReference type="SMR" id="Q9DGM7"/>
<dbReference type="STRING" id="7998.ENSIPUP00000002881"/>
<dbReference type="Proteomes" id="UP000221080">
    <property type="component" value="Unplaced"/>
</dbReference>
<dbReference type="GO" id="GO:0005737">
    <property type="term" value="C:cytoplasm"/>
    <property type="evidence" value="ECO:0007669"/>
    <property type="project" value="UniProtKB-SubCell"/>
</dbReference>
<dbReference type="GO" id="GO:0005634">
    <property type="term" value="C:nucleus"/>
    <property type="evidence" value="ECO:0007669"/>
    <property type="project" value="UniProtKB-SubCell"/>
</dbReference>
<dbReference type="GO" id="GO:1990904">
    <property type="term" value="C:ribonucleoprotein complex"/>
    <property type="evidence" value="ECO:0007669"/>
    <property type="project" value="UniProtKB-KW"/>
</dbReference>
<dbReference type="CDD" id="cd08825">
    <property type="entry name" value="MVP_shoulder"/>
    <property type="match status" value="1"/>
</dbReference>
<dbReference type="FunFam" id="2.30.30.560:FF:000002">
    <property type="entry name" value="Major vault protein-alpha"/>
    <property type="match status" value="1"/>
</dbReference>
<dbReference type="FunFam" id="2.30.30.570:FF:000002">
    <property type="entry name" value="Major vault protein-alpha"/>
    <property type="match status" value="1"/>
</dbReference>
<dbReference type="FunFam" id="2.30.30.550:FF:000001">
    <property type="entry name" value="major vault protein-like"/>
    <property type="match status" value="3"/>
</dbReference>
<dbReference type="FunFam" id="2.30.30.560:FF:000001">
    <property type="entry name" value="major vault protein-like"/>
    <property type="match status" value="1"/>
</dbReference>
<dbReference type="FunFam" id="2.30.30.570:FF:000001">
    <property type="entry name" value="major vault protein-like"/>
    <property type="match status" value="1"/>
</dbReference>
<dbReference type="FunFam" id="2.30.30.620:FF:000001">
    <property type="entry name" value="major vault protein-like"/>
    <property type="match status" value="1"/>
</dbReference>
<dbReference type="FunFam" id="3.30.479.30:FF:000010">
    <property type="entry name" value="major vault protein-like"/>
    <property type="match status" value="1"/>
</dbReference>
<dbReference type="Gene3D" id="2.30.30.560">
    <property type="match status" value="2"/>
</dbReference>
<dbReference type="Gene3D" id="2.30.30.570">
    <property type="match status" value="2"/>
</dbReference>
<dbReference type="Gene3D" id="2.30.30.620">
    <property type="match status" value="1"/>
</dbReference>
<dbReference type="Gene3D" id="6.10.250.720">
    <property type="match status" value="1"/>
</dbReference>
<dbReference type="Gene3D" id="6.20.380.10">
    <property type="match status" value="1"/>
</dbReference>
<dbReference type="Gene3D" id="3.30.479.30">
    <property type="entry name" value="Band 7 domain"/>
    <property type="match status" value="1"/>
</dbReference>
<dbReference type="Gene3D" id="2.30.30.550">
    <property type="entry name" value="Major Vault Protein repeat"/>
    <property type="match status" value="4"/>
</dbReference>
<dbReference type="InterPro" id="IPR036013">
    <property type="entry name" value="Band_7/SPFH_dom_sf"/>
</dbReference>
<dbReference type="InterPro" id="IPR039059">
    <property type="entry name" value="MVP"/>
</dbReference>
<dbReference type="InterPro" id="IPR041139">
    <property type="entry name" value="MVP_rep_dom"/>
</dbReference>
<dbReference type="InterPro" id="IPR043023">
    <property type="entry name" value="MVP_rep_sf"/>
</dbReference>
<dbReference type="InterPro" id="IPR021870">
    <property type="entry name" value="MVP_shoulder"/>
</dbReference>
<dbReference type="InterPro" id="IPR041134">
    <property type="entry name" value="Vault_2"/>
</dbReference>
<dbReference type="InterPro" id="IPR043179">
    <property type="entry name" value="Vault_2_sf"/>
</dbReference>
<dbReference type="InterPro" id="IPR040989">
    <property type="entry name" value="Vault_3"/>
</dbReference>
<dbReference type="InterPro" id="IPR041136">
    <property type="entry name" value="Vault_4"/>
</dbReference>
<dbReference type="InterPro" id="IPR002499">
    <property type="entry name" value="Vault_N"/>
</dbReference>
<dbReference type="PANTHER" id="PTHR14165">
    <property type="entry name" value="MAJOR VAULT PROTEIN"/>
    <property type="match status" value="1"/>
</dbReference>
<dbReference type="PANTHER" id="PTHR14165:SF3">
    <property type="entry name" value="MAJOR VAULT PROTEIN"/>
    <property type="match status" value="1"/>
</dbReference>
<dbReference type="Pfam" id="PF11978">
    <property type="entry name" value="MVP_shoulder"/>
    <property type="match status" value="1"/>
</dbReference>
<dbReference type="Pfam" id="PF01505">
    <property type="entry name" value="Vault"/>
    <property type="match status" value="4"/>
</dbReference>
<dbReference type="Pfam" id="PF17794">
    <property type="entry name" value="Vault_2"/>
    <property type="match status" value="2"/>
</dbReference>
<dbReference type="Pfam" id="PF17795">
    <property type="entry name" value="Vault_3"/>
    <property type="match status" value="1"/>
</dbReference>
<dbReference type="Pfam" id="PF17796">
    <property type="entry name" value="Vault_4"/>
    <property type="match status" value="1"/>
</dbReference>
<dbReference type="PROSITE" id="PS50096">
    <property type="entry name" value="IQ"/>
    <property type="match status" value="1"/>
</dbReference>
<dbReference type="PROSITE" id="PS51224">
    <property type="entry name" value="MVP"/>
    <property type="match status" value="8"/>
</dbReference>
<feature type="chain" id="PRO_0000158983" description="Major vault protein">
    <location>
        <begin position="1"/>
        <end position="871" status="greater than"/>
    </location>
</feature>
<feature type="repeat" description="MVP 1">
    <location>
        <begin position="2"/>
        <end position="69"/>
    </location>
</feature>
<feature type="repeat" description="MVP 2">
    <location>
        <begin position="70"/>
        <end position="124"/>
    </location>
</feature>
<feature type="repeat" description="MVP 3">
    <location>
        <begin position="125"/>
        <end position="177"/>
    </location>
</feature>
<feature type="repeat" description="MVP 4">
    <location>
        <begin position="178"/>
        <end position="230"/>
    </location>
</feature>
<feature type="repeat" description="MVP 5">
    <location>
        <begin position="231"/>
        <end position="285"/>
    </location>
</feature>
<feature type="repeat" description="MVP 6">
    <location>
        <begin position="286"/>
        <end position="336"/>
    </location>
</feature>
<feature type="repeat" description="MVP 7">
    <location>
        <begin position="337"/>
        <end position="407"/>
    </location>
</feature>
<feature type="repeat" description="MVP 8">
    <location>
        <begin position="408"/>
        <end position="482"/>
    </location>
</feature>
<feature type="repeat" description="MVP 9">
    <location>
        <begin position="483"/>
        <end position="545"/>
    </location>
</feature>
<feature type="domain" description="IQ" evidence="3">
    <location>
        <begin position="688"/>
        <end position="717"/>
    </location>
</feature>
<feature type="region of interest" description="Disordered" evidence="4">
    <location>
        <begin position="356"/>
        <end position="381"/>
    </location>
</feature>
<feature type="region of interest" description="Disordered" evidence="4">
    <location>
        <begin position="684"/>
        <end position="710"/>
    </location>
</feature>
<feature type="compositionally biased region" description="Acidic residues" evidence="4">
    <location>
        <begin position="357"/>
        <end position="370"/>
    </location>
</feature>
<feature type="compositionally biased region" description="Basic and acidic residues" evidence="4">
    <location>
        <begin position="687"/>
        <end position="710"/>
    </location>
</feature>
<feature type="non-terminal residue">
    <location>
        <position position="871"/>
    </location>
</feature>